<organism>
    <name type="scientific">Burkholderia ambifaria (strain ATCC BAA-244 / DSM 16087 / CCUG 44356 / LMG 19182 / AMMD)</name>
    <name type="common">Burkholderia cepacia (strain AMMD)</name>
    <dbReference type="NCBI Taxonomy" id="339670"/>
    <lineage>
        <taxon>Bacteria</taxon>
        <taxon>Pseudomonadati</taxon>
        <taxon>Pseudomonadota</taxon>
        <taxon>Betaproteobacteria</taxon>
        <taxon>Burkholderiales</taxon>
        <taxon>Burkholderiaceae</taxon>
        <taxon>Burkholderia</taxon>
        <taxon>Burkholderia cepacia complex</taxon>
    </lineage>
</organism>
<comment type="function">
    <text evidence="1">One of the primary rRNA binding proteins, it binds directly to 16S rRNA where it nucleates assembly of the head domain of the 30S subunit. Is located at the subunit interface close to the decoding center, probably blocks exit of the E-site tRNA.</text>
</comment>
<comment type="subunit">
    <text evidence="1">Part of the 30S ribosomal subunit. Contacts proteins S9 and S11.</text>
</comment>
<comment type="similarity">
    <text evidence="1">Belongs to the universal ribosomal protein uS7 family.</text>
</comment>
<proteinExistence type="inferred from homology"/>
<protein>
    <recommendedName>
        <fullName evidence="1">Small ribosomal subunit protein uS7</fullName>
    </recommendedName>
    <alternativeName>
        <fullName evidence="2">30S ribosomal protein S7</fullName>
    </alternativeName>
</protein>
<gene>
    <name evidence="1" type="primary">rpsG</name>
    <name type="ordered locus">Bamb_0263</name>
</gene>
<reference key="1">
    <citation type="submission" date="2006-08" db="EMBL/GenBank/DDBJ databases">
        <title>Complete sequence of chromosome 1 of Burkholderia cepacia AMMD.</title>
        <authorList>
            <person name="Copeland A."/>
            <person name="Lucas S."/>
            <person name="Lapidus A."/>
            <person name="Barry K."/>
            <person name="Detter J.C."/>
            <person name="Glavina del Rio T."/>
            <person name="Hammon N."/>
            <person name="Israni S."/>
            <person name="Pitluck S."/>
            <person name="Bruce D."/>
            <person name="Chain P."/>
            <person name="Malfatti S."/>
            <person name="Shin M."/>
            <person name="Vergez L."/>
            <person name="Schmutz J."/>
            <person name="Larimer F."/>
            <person name="Land M."/>
            <person name="Hauser L."/>
            <person name="Kyrpides N."/>
            <person name="Kim E."/>
            <person name="Parke J."/>
            <person name="Coenye T."/>
            <person name="Konstantinidis K."/>
            <person name="Ramette A."/>
            <person name="Tiedje J."/>
            <person name="Richardson P."/>
        </authorList>
    </citation>
    <scope>NUCLEOTIDE SEQUENCE [LARGE SCALE GENOMIC DNA]</scope>
    <source>
        <strain>ATCC BAA-244 / DSM 16087 / CCUG 44356 / LMG 19182 / AMMD</strain>
    </source>
</reference>
<sequence length="156" mass="17670">MPRRREVPKREVLPDPKFGNVDVAKFMNMLMLSGKKSVAERIVYGAFEQIQTKGGKDPLEVFTVALNNVKPVVEVKSRRVGGANYQVPVEVRPSRRMALAMRWLREAAKKRSEKSMALRLAGELSEAAEGRGGAMKKRDEVHRMAEANRAFSHFRF</sequence>
<name>RS7_BURCM</name>
<accession>Q0BJ50</accession>
<dbReference type="EMBL" id="CP000440">
    <property type="protein sequence ID" value="ABI85823.1"/>
    <property type="molecule type" value="Genomic_DNA"/>
</dbReference>
<dbReference type="RefSeq" id="WP_006477195.1">
    <property type="nucleotide sequence ID" value="NZ_CP009798.1"/>
</dbReference>
<dbReference type="SMR" id="Q0BJ50"/>
<dbReference type="GeneID" id="93193455"/>
<dbReference type="KEGG" id="bam:Bamb_0263"/>
<dbReference type="PATRIC" id="fig|339670.21.peg.1357"/>
<dbReference type="eggNOG" id="COG0049">
    <property type="taxonomic scope" value="Bacteria"/>
</dbReference>
<dbReference type="Proteomes" id="UP000000662">
    <property type="component" value="Chromosome 1"/>
</dbReference>
<dbReference type="GO" id="GO:0015935">
    <property type="term" value="C:small ribosomal subunit"/>
    <property type="evidence" value="ECO:0007669"/>
    <property type="project" value="InterPro"/>
</dbReference>
<dbReference type="GO" id="GO:0019843">
    <property type="term" value="F:rRNA binding"/>
    <property type="evidence" value="ECO:0007669"/>
    <property type="project" value="UniProtKB-UniRule"/>
</dbReference>
<dbReference type="GO" id="GO:0003735">
    <property type="term" value="F:structural constituent of ribosome"/>
    <property type="evidence" value="ECO:0007669"/>
    <property type="project" value="InterPro"/>
</dbReference>
<dbReference type="GO" id="GO:0000049">
    <property type="term" value="F:tRNA binding"/>
    <property type="evidence" value="ECO:0007669"/>
    <property type="project" value="UniProtKB-UniRule"/>
</dbReference>
<dbReference type="GO" id="GO:0006412">
    <property type="term" value="P:translation"/>
    <property type="evidence" value="ECO:0007669"/>
    <property type="project" value="UniProtKB-UniRule"/>
</dbReference>
<dbReference type="CDD" id="cd14869">
    <property type="entry name" value="uS7_Bacteria"/>
    <property type="match status" value="1"/>
</dbReference>
<dbReference type="FunFam" id="1.10.455.10:FF:000001">
    <property type="entry name" value="30S ribosomal protein S7"/>
    <property type="match status" value="1"/>
</dbReference>
<dbReference type="Gene3D" id="1.10.455.10">
    <property type="entry name" value="Ribosomal protein S7 domain"/>
    <property type="match status" value="1"/>
</dbReference>
<dbReference type="HAMAP" id="MF_00480_B">
    <property type="entry name" value="Ribosomal_uS7_B"/>
    <property type="match status" value="1"/>
</dbReference>
<dbReference type="InterPro" id="IPR000235">
    <property type="entry name" value="Ribosomal_uS7"/>
</dbReference>
<dbReference type="InterPro" id="IPR005717">
    <property type="entry name" value="Ribosomal_uS7_bac/org-type"/>
</dbReference>
<dbReference type="InterPro" id="IPR020606">
    <property type="entry name" value="Ribosomal_uS7_CS"/>
</dbReference>
<dbReference type="InterPro" id="IPR023798">
    <property type="entry name" value="Ribosomal_uS7_dom"/>
</dbReference>
<dbReference type="InterPro" id="IPR036823">
    <property type="entry name" value="Ribosomal_uS7_dom_sf"/>
</dbReference>
<dbReference type="NCBIfam" id="TIGR01029">
    <property type="entry name" value="rpsG_bact"/>
    <property type="match status" value="1"/>
</dbReference>
<dbReference type="PANTHER" id="PTHR11205">
    <property type="entry name" value="RIBOSOMAL PROTEIN S7"/>
    <property type="match status" value="1"/>
</dbReference>
<dbReference type="Pfam" id="PF00177">
    <property type="entry name" value="Ribosomal_S7"/>
    <property type="match status" value="1"/>
</dbReference>
<dbReference type="PIRSF" id="PIRSF002122">
    <property type="entry name" value="RPS7p_RPS7a_RPS5e_RPS7o"/>
    <property type="match status" value="1"/>
</dbReference>
<dbReference type="SUPFAM" id="SSF47973">
    <property type="entry name" value="Ribosomal protein S7"/>
    <property type="match status" value="1"/>
</dbReference>
<dbReference type="PROSITE" id="PS00052">
    <property type="entry name" value="RIBOSOMAL_S7"/>
    <property type="match status" value="1"/>
</dbReference>
<evidence type="ECO:0000255" key="1">
    <source>
        <dbReference type="HAMAP-Rule" id="MF_00480"/>
    </source>
</evidence>
<evidence type="ECO:0000305" key="2"/>
<feature type="chain" id="PRO_1000014156" description="Small ribosomal subunit protein uS7">
    <location>
        <begin position="1"/>
        <end position="156"/>
    </location>
</feature>
<keyword id="KW-0687">Ribonucleoprotein</keyword>
<keyword id="KW-0689">Ribosomal protein</keyword>
<keyword id="KW-0694">RNA-binding</keyword>
<keyword id="KW-0699">rRNA-binding</keyword>
<keyword id="KW-0820">tRNA-binding</keyword>